<keyword id="KW-0249">Electron transport</keyword>
<keyword id="KW-0472">Membrane</keyword>
<keyword id="KW-0496">Mitochondrion</keyword>
<keyword id="KW-0999">Mitochondrion inner membrane</keyword>
<keyword id="KW-0520">NAD</keyword>
<keyword id="KW-0679">Respiratory chain</keyword>
<keyword id="KW-1278">Translocase</keyword>
<keyword id="KW-0812">Transmembrane</keyword>
<keyword id="KW-1133">Transmembrane helix</keyword>
<keyword id="KW-0813">Transport</keyword>
<keyword id="KW-0830">Ubiquinone</keyword>
<protein>
    <recommendedName>
        <fullName>NADH-ubiquinone oxidoreductase chain 2</fullName>
        <ecNumber>7.1.1.2</ecNumber>
    </recommendedName>
    <alternativeName>
        <fullName>NADH dehydrogenase subunit 2</fullName>
    </alternativeName>
</protein>
<geneLocation type="mitochondrion"/>
<dbReference type="EC" id="7.1.1.2"/>
<dbReference type="EMBL" id="X54253">
    <property type="protein sequence ID" value="CAA38167.1"/>
    <property type="molecule type" value="Genomic_DNA"/>
</dbReference>
<dbReference type="PIR" id="S26018">
    <property type="entry name" value="S26018"/>
</dbReference>
<dbReference type="RefSeq" id="NP_006945.2">
    <property type="nucleotide sequence ID" value="NC_001327.1"/>
</dbReference>
<dbReference type="SMR" id="P24877"/>
<dbReference type="GeneID" id="807674"/>
<dbReference type="CTD" id="4536"/>
<dbReference type="GO" id="GO:0005743">
    <property type="term" value="C:mitochondrial inner membrane"/>
    <property type="evidence" value="ECO:0007669"/>
    <property type="project" value="UniProtKB-SubCell"/>
</dbReference>
<dbReference type="GO" id="GO:0008137">
    <property type="term" value="F:NADH dehydrogenase (ubiquinone) activity"/>
    <property type="evidence" value="ECO:0007669"/>
    <property type="project" value="UniProtKB-EC"/>
</dbReference>
<reference key="1">
    <citation type="journal article" date="1992" name="Genetics">
        <title>The mitochondrial genomes of two nematodes, Caenorhabditis elegans and Ascaris suum.</title>
        <authorList>
            <person name="Okimoto R."/>
            <person name="Macfarlane J.L."/>
            <person name="Clary D.O."/>
            <person name="Wolstenholme D.R."/>
        </authorList>
    </citation>
    <scope>NUCLEOTIDE SEQUENCE [GENOMIC DNA]</scope>
    <source>
        <tissue>Body wall muscle</tissue>
        <tissue>Egg</tissue>
    </source>
</reference>
<accession>P24877</accession>
<feature type="chain" id="PRO_0000117554" description="NADH-ubiquinone oxidoreductase chain 2">
    <location>
        <begin position="1"/>
        <end position="300"/>
    </location>
</feature>
<feature type="transmembrane region" description="Helical" evidence="2">
    <location>
        <begin position="4"/>
        <end position="24"/>
    </location>
</feature>
<feature type="transmembrane region" description="Helical" evidence="2">
    <location>
        <begin position="29"/>
        <end position="49"/>
    </location>
</feature>
<feature type="transmembrane region" description="Helical" evidence="2">
    <location>
        <begin position="58"/>
        <end position="78"/>
    </location>
</feature>
<feature type="transmembrane region" description="Helical" evidence="2">
    <location>
        <begin position="87"/>
        <end position="107"/>
    </location>
</feature>
<feature type="transmembrane region" description="Helical" evidence="2">
    <location>
        <begin position="122"/>
        <end position="142"/>
    </location>
</feature>
<feature type="transmembrane region" description="Helical" evidence="2">
    <location>
        <begin position="165"/>
        <end position="185"/>
    </location>
</feature>
<feature type="transmembrane region" description="Helical" evidence="2">
    <location>
        <begin position="201"/>
        <end position="221"/>
    </location>
</feature>
<feature type="transmembrane region" description="Helical" evidence="2">
    <location>
        <begin position="231"/>
        <end position="251"/>
    </location>
</feature>
<feature type="transmembrane region" description="Helical" evidence="2">
    <location>
        <begin position="267"/>
        <end position="287"/>
    </location>
</feature>
<sequence>MLLFFCIFVVFLCVLNFFTSNVLVWWSVFLLMTVVFVCLSKGSGSYVGILNYFVIQESLGLFFLVFNVFLLQFFIVMMKVGVAPFHFWVFSVTGSLYDWLLMWFLTFQKLPFLPVLVQLFDFSAFFIFLFGICVCYFQLFVLKGYKSMMVISSTESFNWVVLTCFLSVVNVIYLFFYYVVLMAFLMPNFNVKDFNFVNWEVLLVFLNVPFSVSFFIKIFVLSEVFKLDGLFLLFLLLMMFLSMLCFSLWLVNMSVKNMKMLGDNFKVLFFLVFPMMVFSVIYYFSKILLCRLDKAEFFLK</sequence>
<comment type="function">
    <text evidence="1">Core subunit of the mitochondrial membrane respiratory chain NADH dehydrogenase (Complex I) that is believed to belong to the minimal assembly required for catalysis. Complex I functions in the transfer of electrons from NADH to the respiratory chain. The immediate electron acceptor for the enzyme is believed to be ubiquinone (By similarity).</text>
</comment>
<comment type="catalytic activity">
    <reaction>
        <text>a ubiquinone + NADH + 5 H(+)(in) = a ubiquinol + NAD(+) + 4 H(+)(out)</text>
        <dbReference type="Rhea" id="RHEA:29091"/>
        <dbReference type="Rhea" id="RHEA-COMP:9565"/>
        <dbReference type="Rhea" id="RHEA-COMP:9566"/>
        <dbReference type="ChEBI" id="CHEBI:15378"/>
        <dbReference type="ChEBI" id="CHEBI:16389"/>
        <dbReference type="ChEBI" id="CHEBI:17976"/>
        <dbReference type="ChEBI" id="CHEBI:57540"/>
        <dbReference type="ChEBI" id="CHEBI:57945"/>
        <dbReference type="EC" id="7.1.1.2"/>
    </reaction>
</comment>
<comment type="subcellular location">
    <subcellularLocation>
        <location>Mitochondrion inner membrane</location>
        <topology>Multi-pass membrane protein</topology>
    </subcellularLocation>
</comment>
<comment type="similarity">
    <text evidence="3">Belongs to the complex I subunit 2 family.</text>
</comment>
<name>NU2M_ASCSU</name>
<gene>
    <name type="primary">ND2</name>
</gene>
<evidence type="ECO:0000250" key="1"/>
<evidence type="ECO:0000255" key="2"/>
<evidence type="ECO:0000305" key="3"/>
<proteinExistence type="inferred from homology"/>
<organism>
    <name type="scientific">Ascaris suum</name>
    <name type="common">Pig roundworm</name>
    <name type="synonym">Ascaris lumbricoides</name>
    <dbReference type="NCBI Taxonomy" id="6253"/>
    <lineage>
        <taxon>Eukaryota</taxon>
        <taxon>Metazoa</taxon>
        <taxon>Ecdysozoa</taxon>
        <taxon>Nematoda</taxon>
        <taxon>Chromadorea</taxon>
        <taxon>Rhabditida</taxon>
        <taxon>Spirurina</taxon>
        <taxon>Ascaridomorpha</taxon>
        <taxon>Ascaridoidea</taxon>
        <taxon>Ascarididae</taxon>
        <taxon>Ascaris</taxon>
    </lineage>
</organism>